<feature type="chain" id="PRO_1000049561" description="Glycerol-3-phosphate dehydrogenase [NAD(P)+]">
    <location>
        <begin position="1"/>
        <end position="338"/>
    </location>
</feature>
<feature type="active site" description="Proton acceptor" evidence="1">
    <location>
        <position position="194"/>
    </location>
</feature>
<feature type="binding site" evidence="1">
    <location>
        <position position="13"/>
    </location>
    <ligand>
        <name>NADPH</name>
        <dbReference type="ChEBI" id="CHEBI:57783"/>
    </ligand>
</feature>
<feature type="binding site" evidence="1">
    <location>
        <position position="14"/>
    </location>
    <ligand>
        <name>NADPH</name>
        <dbReference type="ChEBI" id="CHEBI:57783"/>
    </ligand>
</feature>
<feature type="binding site" evidence="1">
    <location>
        <position position="108"/>
    </location>
    <ligand>
        <name>NADPH</name>
        <dbReference type="ChEBI" id="CHEBI:57783"/>
    </ligand>
</feature>
<feature type="binding site" evidence="1">
    <location>
        <position position="108"/>
    </location>
    <ligand>
        <name>sn-glycerol 3-phosphate</name>
        <dbReference type="ChEBI" id="CHEBI:57597"/>
    </ligand>
</feature>
<feature type="binding site" evidence="1">
    <location>
        <position position="139"/>
    </location>
    <ligand>
        <name>sn-glycerol 3-phosphate</name>
        <dbReference type="ChEBI" id="CHEBI:57597"/>
    </ligand>
</feature>
<feature type="binding site" evidence="1">
    <location>
        <position position="141"/>
    </location>
    <ligand>
        <name>sn-glycerol 3-phosphate</name>
        <dbReference type="ChEBI" id="CHEBI:57597"/>
    </ligand>
</feature>
<feature type="binding site" evidence="1">
    <location>
        <position position="143"/>
    </location>
    <ligand>
        <name>NADPH</name>
        <dbReference type="ChEBI" id="CHEBI:57783"/>
    </ligand>
</feature>
<feature type="binding site" evidence="1">
    <location>
        <position position="194"/>
    </location>
    <ligand>
        <name>sn-glycerol 3-phosphate</name>
        <dbReference type="ChEBI" id="CHEBI:57597"/>
    </ligand>
</feature>
<feature type="binding site" evidence="1">
    <location>
        <position position="247"/>
    </location>
    <ligand>
        <name>sn-glycerol 3-phosphate</name>
        <dbReference type="ChEBI" id="CHEBI:57597"/>
    </ligand>
</feature>
<feature type="binding site" evidence="1">
    <location>
        <position position="257"/>
    </location>
    <ligand>
        <name>sn-glycerol 3-phosphate</name>
        <dbReference type="ChEBI" id="CHEBI:57597"/>
    </ligand>
</feature>
<feature type="binding site" evidence="1">
    <location>
        <position position="258"/>
    </location>
    <ligand>
        <name>NADPH</name>
        <dbReference type="ChEBI" id="CHEBI:57783"/>
    </ligand>
</feature>
<feature type="binding site" evidence="1">
    <location>
        <position position="258"/>
    </location>
    <ligand>
        <name>sn-glycerol 3-phosphate</name>
        <dbReference type="ChEBI" id="CHEBI:57597"/>
    </ligand>
</feature>
<feature type="binding site" evidence="1">
    <location>
        <position position="259"/>
    </location>
    <ligand>
        <name>sn-glycerol 3-phosphate</name>
        <dbReference type="ChEBI" id="CHEBI:57597"/>
    </ligand>
</feature>
<feature type="binding site" evidence="1">
    <location>
        <position position="282"/>
    </location>
    <ligand>
        <name>NADPH</name>
        <dbReference type="ChEBI" id="CHEBI:57783"/>
    </ligand>
</feature>
<feature type="binding site" evidence="1">
    <location>
        <position position="284"/>
    </location>
    <ligand>
        <name>NADPH</name>
        <dbReference type="ChEBI" id="CHEBI:57783"/>
    </ligand>
</feature>
<evidence type="ECO:0000255" key="1">
    <source>
        <dbReference type="HAMAP-Rule" id="MF_00394"/>
    </source>
</evidence>
<reference key="1">
    <citation type="journal article" date="2007" name="PLoS ONE">
        <title>A glimpse of streptococcal toxic shock syndrome from comparative genomics of S. suis 2 Chinese isolates.</title>
        <authorList>
            <person name="Chen C."/>
            <person name="Tang J."/>
            <person name="Dong W."/>
            <person name="Wang C."/>
            <person name="Feng Y."/>
            <person name="Wang J."/>
            <person name="Zheng F."/>
            <person name="Pan X."/>
            <person name="Liu D."/>
            <person name="Li M."/>
            <person name="Song Y."/>
            <person name="Zhu X."/>
            <person name="Sun H."/>
            <person name="Feng T."/>
            <person name="Guo Z."/>
            <person name="Ju A."/>
            <person name="Ge J."/>
            <person name="Dong Y."/>
            <person name="Sun W."/>
            <person name="Jiang Y."/>
            <person name="Wang J."/>
            <person name="Yan J."/>
            <person name="Yang H."/>
            <person name="Wang X."/>
            <person name="Gao G.F."/>
            <person name="Yang R."/>
            <person name="Wang J."/>
            <person name="Yu J."/>
        </authorList>
    </citation>
    <scope>NUCLEOTIDE SEQUENCE [LARGE SCALE GENOMIC DNA]</scope>
    <source>
        <strain>98HAH33</strain>
    </source>
</reference>
<dbReference type="EC" id="1.1.1.94" evidence="1"/>
<dbReference type="EMBL" id="CP000408">
    <property type="protein sequence ID" value="ABP93198.1"/>
    <property type="molecule type" value="Genomic_DNA"/>
</dbReference>
<dbReference type="SMR" id="A4W4A9"/>
<dbReference type="KEGG" id="ssv:SSU98_2040"/>
<dbReference type="HOGENOM" id="CLU_033449_0_2_9"/>
<dbReference type="UniPathway" id="UPA00940"/>
<dbReference type="GO" id="GO:0005829">
    <property type="term" value="C:cytosol"/>
    <property type="evidence" value="ECO:0007669"/>
    <property type="project" value="TreeGrafter"/>
</dbReference>
<dbReference type="GO" id="GO:0047952">
    <property type="term" value="F:glycerol-3-phosphate dehydrogenase [NAD(P)+] activity"/>
    <property type="evidence" value="ECO:0007669"/>
    <property type="project" value="UniProtKB-UniRule"/>
</dbReference>
<dbReference type="GO" id="GO:0051287">
    <property type="term" value="F:NAD binding"/>
    <property type="evidence" value="ECO:0007669"/>
    <property type="project" value="InterPro"/>
</dbReference>
<dbReference type="GO" id="GO:0005975">
    <property type="term" value="P:carbohydrate metabolic process"/>
    <property type="evidence" value="ECO:0007669"/>
    <property type="project" value="InterPro"/>
</dbReference>
<dbReference type="GO" id="GO:0046167">
    <property type="term" value="P:glycerol-3-phosphate biosynthetic process"/>
    <property type="evidence" value="ECO:0007669"/>
    <property type="project" value="UniProtKB-UniRule"/>
</dbReference>
<dbReference type="GO" id="GO:0046168">
    <property type="term" value="P:glycerol-3-phosphate catabolic process"/>
    <property type="evidence" value="ECO:0007669"/>
    <property type="project" value="InterPro"/>
</dbReference>
<dbReference type="GO" id="GO:0006650">
    <property type="term" value="P:glycerophospholipid metabolic process"/>
    <property type="evidence" value="ECO:0007669"/>
    <property type="project" value="UniProtKB-UniRule"/>
</dbReference>
<dbReference type="GO" id="GO:0008654">
    <property type="term" value="P:phospholipid biosynthetic process"/>
    <property type="evidence" value="ECO:0007669"/>
    <property type="project" value="UniProtKB-KW"/>
</dbReference>
<dbReference type="FunFam" id="1.10.1040.10:FF:000001">
    <property type="entry name" value="Glycerol-3-phosphate dehydrogenase [NAD(P)+]"/>
    <property type="match status" value="1"/>
</dbReference>
<dbReference type="FunFam" id="3.40.50.720:FF:000019">
    <property type="entry name" value="Glycerol-3-phosphate dehydrogenase [NAD(P)+]"/>
    <property type="match status" value="1"/>
</dbReference>
<dbReference type="Gene3D" id="1.10.1040.10">
    <property type="entry name" value="N-(1-d-carboxylethyl)-l-norvaline Dehydrogenase, domain 2"/>
    <property type="match status" value="1"/>
</dbReference>
<dbReference type="Gene3D" id="3.40.50.720">
    <property type="entry name" value="NAD(P)-binding Rossmann-like Domain"/>
    <property type="match status" value="1"/>
</dbReference>
<dbReference type="HAMAP" id="MF_00394">
    <property type="entry name" value="NAD_Glyc3P_dehydrog"/>
    <property type="match status" value="1"/>
</dbReference>
<dbReference type="InterPro" id="IPR008927">
    <property type="entry name" value="6-PGluconate_DH-like_C_sf"/>
</dbReference>
<dbReference type="InterPro" id="IPR013328">
    <property type="entry name" value="6PGD_dom2"/>
</dbReference>
<dbReference type="InterPro" id="IPR006168">
    <property type="entry name" value="G3P_DH_NAD-dep"/>
</dbReference>
<dbReference type="InterPro" id="IPR006109">
    <property type="entry name" value="G3P_DH_NAD-dep_C"/>
</dbReference>
<dbReference type="InterPro" id="IPR011128">
    <property type="entry name" value="G3P_DH_NAD-dep_N"/>
</dbReference>
<dbReference type="InterPro" id="IPR036291">
    <property type="entry name" value="NAD(P)-bd_dom_sf"/>
</dbReference>
<dbReference type="NCBIfam" id="NF000940">
    <property type="entry name" value="PRK00094.1-2"/>
    <property type="match status" value="1"/>
</dbReference>
<dbReference type="NCBIfam" id="NF000941">
    <property type="entry name" value="PRK00094.1-3"/>
    <property type="match status" value="1"/>
</dbReference>
<dbReference type="NCBIfam" id="NF000942">
    <property type="entry name" value="PRK00094.1-4"/>
    <property type="match status" value="1"/>
</dbReference>
<dbReference type="PANTHER" id="PTHR11728">
    <property type="entry name" value="GLYCEROL-3-PHOSPHATE DEHYDROGENASE"/>
    <property type="match status" value="1"/>
</dbReference>
<dbReference type="PANTHER" id="PTHR11728:SF1">
    <property type="entry name" value="GLYCEROL-3-PHOSPHATE DEHYDROGENASE [NAD(+)] 2, CHLOROPLASTIC"/>
    <property type="match status" value="1"/>
</dbReference>
<dbReference type="Pfam" id="PF07479">
    <property type="entry name" value="NAD_Gly3P_dh_C"/>
    <property type="match status" value="1"/>
</dbReference>
<dbReference type="Pfam" id="PF01210">
    <property type="entry name" value="NAD_Gly3P_dh_N"/>
    <property type="match status" value="1"/>
</dbReference>
<dbReference type="PIRSF" id="PIRSF000114">
    <property type="entry name" value="Glycerol-3-P_dh"/>
    <property type="match status" value="1"/>
</dbReference>
<dbReference type="PRINTS" id="PR00077">
    <property type="entry name" value="GPDHDRGNASE"/>
</dbReference>
<dbReference type="SUPFAM" id="SSF48179">
    <property type="entry name" value="6-phosphogluconate dehydrogenase C-terminal domain-like"/>
    <property type="match status" value="1"/>
</dbReference>
<dbReference type="SUPFAM" id="SSF51735">
    <property type="entry name" value="NAD(P)-binding Rossmann-fold domains"/>
    <property type="match status" value="1"/>
</dbReference>
<dbReference type="PROSITE" id="PS00957">
    <property type="entry name" value="NAD_G3PDH"/>
    <property type="match status" value="1"/>
</dbReference>
<accession>A4W4A9</accession>
<protein>
    <recommendedName>
        <fullName evidence="1">Glycerol-3-phosphate dehydrogenase [NAD(P)+]</fullName>
        <ecNumber evidence="1">1.1.1.94</ecNumber>
    </recommendedName>
    <alternativeName>
        <fullName evidence="1">NAD(P)(+)-dependent glycerol-3-phosphate dehydrogenase</fullName>
    </alternativeName>
    <alternativeName>
        <fullName evidence="1">NAD(P)H-dependent dihydroxyacetone-phosphate reductase</fullName>
    </alternativeName>
</protein>
<gene>
    <name evidence="1" type="primary">gpsA</name>
    <name type="ordered locus">SSU98_2040</name>
</gene>
<organism>
    <name type="scientific">Streptococcus suis (strain 98HAH33)</name>
    <dbReference type="NCBI Taxonomy" id="391296"/>
    <lineage>
        <taxon>Bacteria</taxon>
        <taxon>Bacillati</taxon>
        <taxon>Bacillota</taxon>
        <taxon>Bacilli</taxon>
        <taxon>Lactobacillales</taxon>
        <taxon>Streptococcaceae</taxon>
        <taxon>Streptococcus</taxon>
    </lineage>
</organism>
<proteinExistence type="inferred from homology"/>
<keyword id="KW-0963">Cytoplasm</keyword>
<keyword id="KW-0444">Lipid biosynthesis</keyword>
<keyword id="KW-0443">Lipid metabolism</keyword>
<keyword id="KW-0520">NAD</keyword>
<keyword id="KW-0521">NADP</keyword>
<keyword id="KW-0547">Nucleotide-binding</keyword>
<keyword id="KW-0560">Oxidoreductase</keyword>
<keyword id="KW-0594">Phospholipid biosynthesis</keyword>
<keyword id="KW-1208">Phospholipid metabolism</keyword>
<name>GPDA_STRS2</name>
<sequence>MTKQTIAILGPGSWGTALGQVLNDNGHTVRIWGNVPEQIDEINKEHTNKRYFKDVILDENIKGYKDLSEALDGVDAVLFVVPTKVTRLVAKQVAQALKHKVVVMHASKGLEPDSHKRLSEVLEEEIPAELRSEIVVVSGPSHAEETIVRDLTLISAASKDLETASYVQNLFSNHYFRLYTNNDVIGVETAGALKNIIAVGAGALHGLGYGDNAKAAIIARGLTEITRLGVAMGANPLTYSGLSGVGDLIVTGTSVHSRNWRAGDQLGRGEKLEDVERNMGMVIEGISTTKAAYELAQELGVYMPITQAIYKVIYQGAGIEDAIKEIMTGEFRHENEWH</sequence>
<comment type="function">
    <text evidence="1">Catalyzes the reduction of the glycolytic intermediate dihydroxyacetone phosphate (DHAP) to sn-glycerol 3-phosphate (G3P), the key precursor for phospholipid synthesis.</text>
</comment>
<comment type="catalytic activity">
    <reaction evidence="1">
        <text>sn-glycerol 3-phosphate + NAD(+) = dihydroxyacetone phosphate + NADH + H(+)</text>
        <dbReference type="Rhea" id="RHEA:11092"/>
        <dbReference type="ChEBI" id="CHEBI:15378"/>
        <dbReference type="ChEBI" id="CHEBI:57540"/>
        <dbReference type="ChEBI" id="CHEBI:57597"/>
        <dbReference type="ChEBI" id="CHEBI:57642"/>
        <dbReference type="ChEBI" id="CHEBI:57945"/>
        <dbReference type="EC" id="1.1.1.94"/>
    </reaction>
    <physiologicalReaction direction="right-to-left" evidence="1">
        <dbReference type="Rhea" id="RHEA:11094"/>
    </physiologicalReaction>
</comment>
<comment type="catalytic activity">
    <reaction evidence="1">
        <text>sn-glycerol 3-phosphate + NADP(+) = dihydroxyacetone phosphate + NADPH + H(+)</text>
        <dbReference type="Rhea" id="RHEA:11096"/>
        <dbReference type="ChEBI" id="CHEBI:15378"/>
        <dbReference type="ChEBI" id="CHEBI:57597"/>
        <dbReference type="ChEBI" id="CHEBI:57642"/>
        <dbReference type="ChEBI" id="CHEBI:57783"/>
        <dbReference type="ChEBI" id="CHEBI:58349"/>
        <dbReference type="EC" id="1.1.1.94"/>
    </reaction>
    <physiologicalReaction direction="right-to-left" evidence="1">
        <dbReference type="Rhea" id="RHEA:11098"/>
    </physiologicalReaction>
</comment>
<comment type="pathway">
    <text evidence="1">Membrane lipid metabolism; glycerophospholipid metabolism.</text>
</comment>
<comment type="subcellular location">
    <subcellularLocation>
        <location evidence="1">Cytoplasm</location>
    </subcellularLocation>
</comment>
<comment type="similarity">
    <text evidence="1">Belongs to the NAD-dependent glycerol-3-phosphate dehydrogenase family.</text>
</comment>